<evidence type="ECO:0000255" key="1">
    <source>
        <dbReference type="HAMAP-Rule" id="MF_01636"/>
    </source>
</evidence>
<gene>
    <name evidence="1" type="primary">ubiD</name>
    <name type="ordered locus">Tola_2975</name>
</gene>
<keyword id="KW-1003">Cell membrane</keyword>
<keyword id="KW-0210">Decarboxylase</keyword>
<keyword id="KW-0285">Flavoprotein</keyword>
<keyword id="KW-0288">FMN</keyword>
<keyword id="KW-0456">Lyase</keyword>
<keyword id="KW-0464">Manganese</keyword>
<keyword id="KW-0472">Membrane</keyword>
<keyword id="KW-0479">Metal-binding</keyword>
<keyword id="KW-1185">Reference proteome</keyword>
<keyword id="KW-0831">Ubiquinone biosynthesis</keyword>
<organism>
    <name type="scientific">Tolumonas auensis (strain DSM 9187 / NBRC 110442 / TA 4)</name>
    <dbReference type="NCBI Taxonomy" id="595494"/>
    <lineage>
        <taxon>Bacteria</taxon>
        <taxon>Pseudomonadati</taxon>
        <taxon>Pseudomonadota</taxon>
        <taxon>Gammaproteobacteria</taxon>
        <taxon>Aeromonadales</taxon>
        <taxon>Aeromonadaceae</taxon>
        <taxon>Tolumonas</taxon>
    </lineage>
</organism>
<accession>C4LD33</accession>
<name>UBID_TOLAT</name>
<feature type="chain" id="PRO_1000215811" description="3-octaprenyl-4-hydroxybenzoate carboxy-lyase">
    <location>
        <begin position="1"/>
        <end position="489"/>
    </location>
</feature>
<feature type="active site" description="Proton donor" evidence="1">
    <location>
        <position position="287"/>
    </location>
</feature>
<feature type="binding site" evidence="1">
    <location>
        <position position="172"/>
    </location>
    <ligand>
        <name>Mn(2+)</name>
        <dbReference type="ChEBI" id="CHEBI:29035"/>
    </ligand>
</feature>
<feature type="binding site" evidence="1">
    <location>
        <begin position="175"/>
        <end position="177"/>
    </location>
    <ligand>
        <name>prenylated FMN</name>
        <dbReference type="ChEBI" id="CHEBI:87746"/>
    </ligand>
</feature>
<feature type="binding site" evidence="1">
    <location>
        <begin position="189"/>
        <end position="191"/>
    </location>
    <ligand>
        <name>prenylated FMN</name>
        <dbReference type="ChEBI" id="CHEBI:87746"/>
    </ligand>
</feature>
<feature type="binding site" evidence="1">
    <location>
        <begin position="194"/>
        <end position="195"/>
    </location>
    <ligand>
        <name>prenylated FMN</name>
        <dbReference type="ChEBI" id="CHEBI:87746"/>
    </ligand>
</feature>
<feature type="binding site" evidence="1">
    <location>
        <position position="238"/>
    </location>
    <ligand>
        <name>Mn(2+)</name>
        <dbReference type="ChEBI" id="CHEBI:29035"/>
    </ligand>
</feature>
<reference key="1">
    <citation type="submission" date="2009-05" db="EMBL/GenBank/DDBJ databases">
        <title>Complete sequence of Tolumonas auensis DSM 9187.</title>
        <authorList>
            <consortium name="US DOE Joint Genome Institute"/>
            <person name="Lucas S."/>
            <person name="Copeland A."/>
            <person name="Lapidus A."/>
            <person name="Glavina del Rio T."/>
            <person name="Tice H."/>
            <person name="Bruce D."/>
            <person name="Goodwin L."/>
            <person name="Pitluck S."/>
            <person name="Chertkov O."/>
            <person name="Brettin T."/>
            <person name="Detter J.C."/>
            <person name="Han C."/>
            <person name="Larimer F."/>
            <person name="Land M."/>
            <person name="Hauser L."/>
            <person name="Kyrpides N."/>
            <person name="Mikhailova N."/>
            <person name="Spring S."/>
            <person name="Beller H."/>
        </authorList>
    </citation>
    <scope>NUCLEOTIDE SEQUENCE [LARGE SCALE GENOMIC DNA]</scope>
    <source>
        <strain>DSM 9187 / NBRC 110442 / TA 4</strain>
    </source>
</reference>
<sequence>MKYRDLRDFIQLLEQRGQLKRIKQEIDPYLEMTEIADRTLRAQGPALLFENPKGSRYPVLANLFGTPQRVAWGMGQEDVSALRDVGEWMAMLKEPEPPKGLRDLFDKLPLFKQILNMPVKRLSKAPCQDIILTGDDVDLNQLPVQHCWPGDVAPLVTWGLTITKGPYKKRQNLGIYRQQLLAKNKLIMRWLDHRGGAIDFREWQEAHPGEPFPVVVAIGADPATILGAVTPVPDTLSEYAFAGLLRQSRTEVVKALSCDLDVPASAEIVLEGYLMPGETAPEGPYGDHTGYYNEVDDFSVFTITHMTMRKDAIYHSTYTGRPPDEPAMLGVALNEVFVPLVRKQFPEIVDFYLPPEGCSYRMAVVTIKKRYPGHAKRVMMGVWSFLRQFMYTKFVIVCDEDVNARDWNDVIWAITTRMDPARDTTLIEHTPIDYLDFASPVAGLGSKMGLDATNKWPGETQREWGTPIHMDEAVKRRVDELWDSLGIFD</sequence>
<proteinExistence type="inferred from homology"/>
<protein>
    <recommendedName>
        <fullName evidence="1">3-octaprenyl-4-hydroxybenzoate carboxy-lyase</fullName>
        <ecNumber evidence="1">4.1.1.98</ecNumber>
    </recommendedName>
    <alternativeName>
        <fullName evidence="1">Polyprenyl p-hydroxybenzoate decarboxylase</fullName>
    </alternativeName>
</protein>
<comment type="function">
    <text evidence="1">Catalyzes the decarboxylation of 3-octaprenyl-4-hydroxy benzoate to 2-octaprenylphenol, an intermediate step in ubiquinone biosynthesis.</text>
</comment>
<comment type="catalytic activity">
    <reaction evidence="1">
        <text>a 4-hydroxy-3-(all-trans-polyprenyl)benzoate + H(+) = a 2-(all-trans-polyprenyl)phenol + CO2</text>
        <dbReference type="Rhea" id="RHEA:41680"/>
        <dbReference type="Rhea" id="RHEA-COMP:9514"/>
        <dbReference type="Rhea" id="RHEA-COMP:9516"/>
        <dbReference type="ChEBI" id="CHEBI:1269"/>
        <dbReference type="ChEBI" id="CHEBI:15378"/>
        <dbReference type="ChEBI" id="CHEBI:16526"/>
        <dbReference type="ChEBI" id="CHEBI:78396"/>
        <dbReference type="EC" id="4.1.1.98"/>
    </reaction>
</comment>
<comment type="cofactor">
    <cofactor evidence="1">
        <name>prenylated FMN</name>
        <dbReference type="ChEBI" id="CHEBI:87746"/>
    </cofactor>
    <text evidence="1">Binds 1 prenylated FMN per subunit.</text>
</comment>
<comment type="cofactor">
    <cofactor evidence="1">
        <name>Mn(2+)</name>
        <dbReference type="ChEBI" id="CHEBI:29035"/>
    </cofactor>
</comment>
<comment type="pathway">
    <text evidence="1">Cofactor biosynthesis; ubiquinone biosynthesis.</text>
</comment>
<comment type="subunit">
    <text evidence="1">Homohexamer.</text>
</comment>
<comment type="subcellular location">
    <subcellularLocation>
        <location evidence="1">Cell membrane</location>
        <topology evidence="1">Peripheral membrane protein</topology>
    </subcellularLocation>
</comment>
<comment type="similarity">
    <text evidence="1">Belongs to the UbiD family.</text>
</comment>
<dbReference type="EC" id="4.1.1.98" evidence="1"/>
<dbReference type="EMBL" id="CP001616">
    <property type="protein sequence ID" value="ACQ94564.1"/>
    <property type="molecule type" value="Genomic_DNA"/>
</dbReference>
<dbReference type="RefSeq" id="WP_015880013.1">
    <property type="nucleotide sequence ID" value="NC_012691.1"/>
</dbReference>
<dbReference type="SMR" id="C4LD33"/>
<dbReference type="STRING" id="595494.Tola_2975"/>
<dbReference type="KEGG" id="tau:Tola_2975"/>
<dbReference type="eggNOG" id="COG0043">
    <property type="taxonomic scope" value="Bacteria"/>
</dbReference>
<dbReference type="HOGENOM" id="CLU_023348_4_1_6"/>
<dbReference type="OrthoDB" id="9809841at2"/>
<dbReference type="UniPathway" id="UPA00232"/>
<dbReference type="Proteomes" id="UP000009073">
    <property type="component" value="Chromosome"/>
</dbReference>
<dbReference type="GO" id="GO:0005829">
    <property type="term" value="C:cytosol"/>
    <property type="evidence" value="ECO:0007669"/>
    <property type="project" value="TreeGrafter"/>
</dbReference>
<dbReference type="GO" id="GO:0005886">
    <property type="term" value="C:plasma membrane"/>
    <property type="evidence" value="ECO:0007669"/>
    <property type="project" value="UniProtKB-SubCell"/>
</dbReference>
<dbReference type="GO" id="GO:0008694">
    <property type="term" value="F:3-octaprenyl-4-hydroxybenzoate carboxy-lyase activity"/>
    <property type="evidence" value="ECO:0007669"/>
    <property type="project" value="UniProtKB-UniRule"/>
</dbReference>
<dbReference type="GO" id="GO:0046872">
    <property type="term" value="F:metal ion binding"/>
    <property type="evidence" value="ECO:0007669"/>
    <property type="project" value="UniProtKB-KW"/>
</dbReference>
<dbReference type="GO" id="GO:0006744">
    <property type="term" value="P:ubiquinone biosynthetic process"/>
    <property type="evidence" value="ECO:0007669"/>
    <property type="project" value="UniProtKB-UniRule"/>
</dbReference>
<dbReference type="FunFam" id="1.20.5.570:FF:000001">
    <property type="entry name" value="3-octaprenyl-4-hydroxybenzoate carboxy-lyase"/>
    <property type="match status" value="1"/>
</dbReference>
<dbReference type="FunFam" id="3.40.1670.10:FF:000001">
    <property type="entry name" value="3-octaprenyl-4-hydroxybenzoate carboxy-lyase"/>
    <property type="match status" value="1"/>
</dbReference>
<dbReference type="Gene3D" id="1.20.5.570">
    <property type="entry name" value="Single helix bin"/>
    <property type="match status" value="1"/>
</dbReference>
<dbReference type="Gene3D" id="3.40.1670.10">
    <property type="entry name" value="UbiD C-terminal domain-like"/>
    <property type="match status" value="1"/>
</dbReference>
<dbReference type="HAMAP" id="MF_01636">
    <property type="entry name" value="UbiD"/>
    <property type="match status" value="1"/>
</dbReference>
<dbReference type="InterPro" id="IPR002830">
    <property type="entry name" value="UbiD"/>
</dbReference>
<dbReference type="InterPro" id="IPR049381">
    <property type="entry name" value="UbiD-like_C"/>
</dbReference>
<dbReference type="InterPro" id="IPR049383">
    <property type="entry name" value="UbiD-like_N"/>
</dbReference>
<dbReference type="InterPro" id="IPR023677">
    <property type="entry name" value="UbiD_bacteria"/>
</dbReference>
<dbReference type="InterPro" id="IPR048304">
    <property type="entry name" value="UbiD_Rift_dom"/>
</dbReference>
<dbReference type="NCBIfam" id="NF008175">
    <property type="entry name" value="PRK10922.1"/>
    <property type="match status" value="1"/>
</dbReference>
<dbReference type="NCBIfam" id="TIGR00148">
    <property type="entry name" value="UbiD family decarboxylase"/>
    <property type="match status" value="1"/>
</dbReference>
<dbReference type="PANTHER" id="PTHR30108">
    <property type="entry name" value="3-OCTAPRENYL-4-HYDROXYBENZOATE CARBOXY-LYASE-RELATED"/>
    <property type="match status" value="1"/>
</dbReference>
<dbReference type="PANTHER" id="PTHR30108:SF17">
    <property type="entry name" value="FERULIC ACID DECARBOXYLASE 1"/>
    <property type="match status" value="1"/>
</dbReference>
<dbReference type="Pfam" id="PF01977">
    <property type="entry name" value="UbiD"/>
    <property type="match status" value="1"/>
</dbReference>
<dbReference type="Pfam" id="PF20696">
    <property type="entry name" value="UbiD_C"/>
    <property type="match status" value="1"/>
</dbReference>
<dbReference type="Pfam" id="PF20695">
    <property type="entry name" value="UbiD_N"/>
    <property type="match status" value="1"/>
</dbReference>
<dbReference type="SUPFAM" id="SSF50475">
    <property type="entry name" value="FMN-binding split barrel"/>
    <property type="match status" value="1"/>
</dbReference>
<dbReference type="SUPFAM" id="SSF143968">
    <property type="entry name" value="UbiD C-terminal domain-like"/>
    <property type="match status" value="1"/>
</dbReference>